<comment type="function">
    <text>May be a positive regulator of formamidase.</text>
</comment>
<comment type="subcellular location">
    <subcellularLocation>
        <location evidence="2">Cytoplasm</location>
    </subcellularLocation>
</comment>
<sequence length="112" mass="12315">MPLYEYECDSCGVFTALRKMSESSLPAECDCCGAVSPRILSVPKLAIMDKLQRSAHERNEKSANEPRTARRSSCGCTGSHTCKTKPPVNQDTGKPGLQMQTKKTARPWMVGH</sequence>
<reference key="1">
    <citation type="journal article" date="1996" name="Eur. J. Biochem.">
        <title>Molecular characterisation of formamidase from Methylophilus methylotrophus.</title>
        <authorList>
            <person name="Wyborn N.R."/>
            <person name="Mills J."/>
            <person name="Williams S.G."/>
            <person name="Jones C.W."/>
        </authorList>
    </citation>
    <scope>NUCLEOTIDE SEQUENCE [GENOMIC DNA]</scope>
    <source>
        <strain>ATCC 53528 / DSM 5691 / CCUG 58724 / LMG 6787 / NCIMB 10515 / AS1</strain>
    </source>
</reference>
<proteinExistence type="predicted"/>
<accession>Q50229</accession>
<protein>
    <recommendedName>
        <fullName>Putative regulatory protein FmdB</fullName>
    </recommendedName>
</protein>
<dbReference type="EMBL" id="X99632">
    <property type="protein sequence ID" value="CAA67954.1"/>
    <property type="molecule type" value="Genomic_DNA"/>
</dbReference>
<dbReference type="PIR" id="S74214">
    <property type="entry name" value="S74214"/>
</dbReference>
<dbReference type="STRING" id="1122236.GCA_000378225_00962"/>
<dbReference type="GO" id="GO:0005737">
    <property type="term" value="C:cytoplasm"/>
    <property type="evidence" value="ECO:0007669"/>
    <property type="project" value="UniProtKB-SubCell"/>
</dbReference>
<dbReference type="InterPro" id="IPR013429">
    <property type="entry name" value="Regulatory_FmdB_Zinc_ribbon"/>
</dbReference>
<dbReference type="NCBIfam" id="TIGR02605">
    <property type="entry name" value="CxxC_CxxC_SSSS"/>
    <property type="match status" value="1"/>
</dbReference>
<dbReference type="Pfam" id="PF09723">
    <property type="entry name" value="Zn_ribbon_8"/>
    <property type="match status" value="1"/>
</dbReference>
<dbReference type="SMART" id="SM00834">
    <property type="entry name" value="CxxC_CXXC_SSSS"/>
    <property type="match status" value="1"/>
</dbReference>
<keyword id="KW-0963">Cytoplasm</keyword>
<evidence type="ECO:0000256" key="1">
    <source>
        <dbReference type="SAM" id="MobiDB-lite"/>
    </source>
</evidence>
<evidence type="ECO:0000305" key="2"/>
<name>FMDB_METME</name>
<gene>
    <name type="primary">fmdB</name>
</gene>
<feature type="chain" id="PRO_0000087313" description="Putative regulatory protein FmdB">
    <location>
        <begin position="1"/>
        <end position="112"/>
    </location>
</feature>
<feature type="region of interest" description="Disordered" evidence="1">
    <location>
        <begin position="52"/>
        <end position="112"/>
    </location>
</feature>
<feature type="compositionally biased region" description="Basic and acidic residues" evidence="1">
    <location>
        <begin position="52"/>
        <end position="68"/>
    </location>
</feature>
<feature type="compositionally biased region" description="Polar residues" evidence="1">
    <location>
        <begin position="74"/>
        <end position="102"/>
    </location>
</feature>
<organism>
    <name type="scientific">Methylophilus methylotrophus</name>
    <name type="common">Bacterium W3A1</name>
    <dbReference type="NCBI Taxonomy" id="17"/>
    <lineage>
        <taxon>Bacteria</taxon>
        <taxon>Pseudomonadati</taxon>
        <taxon>Pseudomonadota</taxon>
        <taxon>Betaproteobacteria</taxon>
        <taxon>Nitrosomonadales</taxon>
        <taxon>Methylophilaceae</taxon>
        <taxon>Methylophilus</taxon>
    </lineage>
</organism>